<comment type="function">
    <text evidence="1">H(+)-stimulated, divalent metal cation uptake system.</text>
</comment>
<comment type="subcellular location">
    <subcellularLocation>
        <location evidence="1">Cell inner membrane</location>
        <topology evidence="1">Multi-pass membrane protein</topology>
    </subcellularLocation>
</comment>
<comment type="similarity">
    <text evidence="1">Belongs to the NRAMP family.</text>
</comment>
<reference key="1">
    <citation type="submission" date="2007-02" db="EMBL/GenBank/DDBJ databases">
        <title>Complete sequence of chromosome of Yersinia pestis Pestoides F.</title>
        <authorList>
            <consortium name="US DOE Joint Genome Institute"/>
            <person name="Copeland A."/>
            <person name="Lucas S."/>
            <person name="Lapidus A."/>
            <person name="Barry K."/>
            <person name="Detter J.C."/>
            <person name="Glavina del Rio T."/>
            <person name="Hammon N."/>
            <person name="Israni S."/>
            <person name="Dalin E."/>
            <person name="Tice H."/>
            <person name="Pitluck S."/>
            <person name="Di Bartolo G."/>
            <person name="Chain P."/>
            <person name="Malfatti S."/>
            <person name="Shin M."/>
            <person name="Vergez L."/>
            <person name="Schmutz J."/>
            <person name="Larimer F."/>
            <person name="Land M."/>
            <person name="Hauser L."/>
            <person name="Worsham P."/>
            <person name="Chu M."/>
            <person name="Bearden S."/>
            <person name="Garcia E."/>
            <person name="Richardson P."/>
        </authorList>
    </citation>
    <scope>NUCLEOTIDE SEQUENCE [LARGE SCALE GENOMIC DNA]</scope>
    <source>
        <strain>Pestoides F</strain>
    </source>
</reference>
<organism>
    <name type="scientific">Yersinia pestis (strain Pestoides F)</name>
    <dbReference type="NCBI Taxonomy" id="386656"/>
    <lineage>
        <taxon>Bacteria</taxon>
        <taxon>Pseudomonadati</taxon>
        <taxon>Pseudomonadota</taxon>
        <taxon>Gammaproteobacteria</taxon>
        <taxon>Enterobacterales</taxon>
        <taxon>Yersiniaceae</taxon>
        <taxon>Yersinia</taxon>
    </lineage>
</organism>
<protein>
    <recommendedName>
        <fullName evidence="1">Divalent metal cation transporter MntH</fullName>
    </recommendedName>
</protein>
<gene>
    <name evidence="1" type="primary">mntH</name>
    <name type="ordered locus">YPDSF_2089</name>
</gene>
<sequence length="409" mass="43742">MLNGRAVDTSRRPLRKIKLSLMGPAFIAAIAYIDPGNFATNIQAGATFGYTLLWVVVWANVMAMLVQLLSAKLGIATGKNLAEHIRDRFPRPVVWAYWVQAEIIVMATDLAEFIGAAIGFKLLFGVTLLQGAVLTGIATFLILMLQNRGQKPLELVIGGLLLFVAAAYIVELIFSQPDIAALGRGMLIPNLPDGNAVFLAAGVLGATIMPHVIYLHSALTQTGGEESKTERYASTKFDVAIAMTIAGFVNLAMMATAAAAFHFNGYENIAEIEEAYITLQPLLGNAAATVFGLSLIAAGLSSTVVGTLAGQVVMQGFVRFYIPMWVRRIVTMLPSFIVILAGMDATQILVMSQVLLSFGIALALVPLLVFTGNKELMGELVDTKTTQILGKLVVLIVVGLNAYLLISLL</sequence>
<evidence type="ECO:0000255" key="1">
    <source>
        <dbReference type="HAMAP-Rule" id="MF_00221"/>
    </source>
</evidence>
<accession>A4TMF6</accession>
<proteinExistence type="inferred from homology"/>
<name>MNTH_YERPP</name>
<feature type="chain" id="PRO_1000024119" description="Divalent metal cation transporter MntH">
    <location>
        <begin position="1"/>
        <end position="409"/>
    </location>
</feature>
<feature type="transmembrane region" description="Helical" evidence="1">
    <location>
        <begin position="19"/>
        <end position="39"/>
    </location>
</feature>
<feature type="transmembrane region" description="Helical" evidence="1">
    <location>
        <begin position="46"/>
        <end position="66"/>
    </location>
</feature>
<feature type="transmembrane region" description="Helical" evidence="1">
    <location>
        <begin position="98"/>
        <end position="118"/>
    </location>
</feature>
<feature type="transmembrane region" description="Helical" evidence="1">
    <location>
        <begin position="122"/>
        <end position="142"/>
    </location>
</feature>
<feature type="transmembrane region" description="Helical" evidence="1">
    <location>
        <begin position="155"/>
        <end position="175"/>
    </location>
</feature>
<feature type="transmembrane region" description="Helical" evidence="1">
    <location>
        <begin position="196"/>
        <end position="216"/>
    </location>
</feature>
<feature type="transmembrane region" description="Helical" evidence="1">
    <location>
        <begin position="241"/>
        <end position="261"/>
    </location>
</feature>
<feature type="transmembrane region" description="Helical" evidence="1">
    <location>
        <begin position="290"/>
        <end position="310"/>
    </location>
</feature>
<feature type="transmembrane region" description="Helical" evidence="1">
    <location>
        <begin position="320"/>
        <end position="340"/>
    </location>
</feature>
<feature type="transmembrane region" description="Helical" evidence="1">
    <location>
        <begin position="348"/>
        <end position="368"/>
    </location>
</feature>
<feature type="transmembrane region" description="Helical" evidence="1">
    <location>
        <begin position="388"/>
        <end position="408"/>
    </location>
</feature>
<dbReference type="EMBL" id="CP000668">
    <property type="protein sequence ID" value="ABP40468.1"/>
    <property type="molecule type" value="Genomic_DNA"/>
</dbReference>
<dbReference type="RefSeq" id="WP_002211621.1">
    <property type="nucleotide sequence ID" value="NZ_CP009715.1"/>
</dbReference>
<dbReference type="SMR" id="A4TMF6"/>
<dbReference type="KEGG" id="ypp:YPDSF_2089"/>
<dbReference type="PATRIC" id="fig|386656.14.peg.3565"/>
<dbReference type="GO" id="GO:0005886">
    <property type="term" value="C:plasma membrane"/>
    <property type="evidence" value="ECO:0007669"/>
    <property type="project" value="UniProtKB-SubCell"/>
</dbReference>
<dbReference type="GO" id="GO:0015086">
    <property type="term" value="F:cadmium ion transmembrane transporter activity"/>
    <property type="evidence" value="ECO:0007669"/>
    <property type="project" value="TreeGrafter"/>
</dbReference>
<dbReference type="GO" id="GO:0005384">
    <property type="term" value="F:manganese ion transmembrane transporter activity"/>
    <property type="evidence" value="ECO:0007669"/>
    <property type="project" value="TreeGrafter"/>
</dbReference>
<dbReference type="GO" id="GO:0046872">
    <property type="term" value="F:metal ion binding"/>
    <property type="evidence" value="ECO:0007669"/>
    <property type="project" value="UniProtKB-UniRule"/>
</dbReference>
<dbReference type="GO" id="GO:0015293">
    <property type="term" value="F:symporter activity"/>
    <property type="evidence" value="ECO:0007669"/>
    <property type="project" value="UniProtKB-UniRule"/>
</dbReference>
<dbReference type="GO" id="GO:0034755">
    <property type="term" value="P:iron ion transmembrane transport"/>
    <property type="evidence" value="ECO:0007669"/>
    <property type="project" value="TreeGrafter"/>
</dbReference>
<dbReference type="HAMAP" id="MF_00221">
    <property type="entry name" value="NRAMP"/>
    <property type="match status" value="1"/>
</dbReference>
<dbReference type="InterPro" id="IPR001046">
    <property type="entry name" value="NRAMP_fam"/>
</dbReference>
<dbReference type="NCBIfam" id="TIGR01197">
    <property type="entry name" value="nramp"/>
    <property type="match status" value="1"/>
</dbReference>
<dbReference type="NCBIfam" id="NF037982">
    <property type="entry name" value="Nramp_1"/>
    <property type="match status" value="1"/>
</dbReference>
<dbReference type="NCBIfam" id="NF001923">
    <property type="entry name" value="PRK00701.1"/>
    <property type="match status" value="1"/>
</dbReference>
<dbReference type="PANTHER" id="PTHR11706:SF33">
    <property type="entry name" value="NATURAL RESISTANCE-ASSOCIATED MACROPHAGE PROTEIN 2"/>
    <property type="match status" value="1"/>
</dbReference>
<dbReference type="PANTHER" id="PTHR11706">
    <property type="entry name" value="SOLUTE CARRIER PROTEIN FAMILY 11 MEMBER"/>
    <property type="match status" value="1"/>
</dbReference>
<dbReference type="Pfam" id="PF01566">
    <property type="entry name" value="Nramp"/>
    <property type="match status" value="1"/>
</dbReference>
<dbReference type="PRINTS" id="PR00447">
    <property type="entry name" value="NATRESASSCMP"/>
</dbReference>
<keyword id="KW-0997">Cell inner membrane</keyword>
<keyword id="KW-1003">Cell membrane</keyword>
<keyword id="KW-0406">Ion transport</keyword>
<keyword id="KW-0472">Membrane</keyword>
<keyword id="KW-0769">Symport</keyword>
<keyword id="KW-0812">Transmembrane</keyword>
<keyword id="KW-1133">Transmembrane helix</keyword>
<keyword id="KW-0813">Transport</keyword>